<sequence length="274" mass="31169">MKITAEMIKDLRQKTHAGMNECHKALQQTEGNIEKAIVFLREKGIIKAAQKQGRVTSEGITNIVFAGNNAFLYEINSETDFVSKNEHFQQLVKMLGEIILKKQLSNVKDLLAFNYQNKTVQELLFEKTSVLGENITLKRVLKVTKKPQESFGIYKHQGGRISVLVVLKNDCPSVSEDIAMHIAASKPQFLTPDKVDPTFLAEEKKILHKQAAKELSDKPAQMIEKIIENRLGKMLKDMCLSEQPFVKNADQKVKDYLKANNTDVVYYVRWEMGN</sequence>
<feature type="chain" id="PRO_0000241461" description="Elongation factor Ts">
    <location>
        <begin position="1"/>
        <end position="274"/>
    </location>
</feature>
<feature type="region of interest" description="Involved in Mg(2+) ion dislocation from EF-Tu" evidence="1">
    <location>
        <begin position="79"/>
        <end position="82"/>
    </location>
</feature>
<organism>
    <name type="scientific">Aster yellows witches'-broom phytoplasma (strain AYWB)</name>
    <dbReference type="NCBI Taxonomy" id="322098"/>
    <lineage>
        <taxon>Bacteria</taxon>
        <taxon>Bacillati</taxon>
        <taxon>Mycoplasmatota</taxon>
        <taxon>Mollicutes</taxon>
        <taxon>Acholeplasmatales</taxon>
        <taxon>Acholeplasmataceae</taxon>
        <taxon>Candidatus Phytoplasma</taxon>
        <taxon>16SrI (Aster yellows group)</taxon>
    </lineage>
</organism>
<protein>
    <recommendedName>
        <fullName evidence="1">Elongation factor Ts</fullName>
        <shortName evidence="1">EF-Ts</shortName>
    </recommendedName>
</protein>
<keyword id="KW-0963">Cytoplasm</keyword>
<keyword id="KW-0251">Elongation factor</keyword>
<keyword id="KW-0648">Protein biosynthesis</keyword>
<accession>Q2NIS3</accession>
<name>EFTS_AYWBP</name>
<evidence type="ECO:0000255" key="1">
    <source>
        <dbReference type="HAMAP-Rule" id="MF_00050"/>
    </source>
</evidence>
<proteinExistence type="inferred from homology"/>
<reference key="1">
    <citation type="journal article" date="2006" name="J. Bacteriol.">
        <title>Living with genome instability: the adaptation of phytoplasmas to diverse environments of their insect and plant hosts.</title>
        <authorList>
            <person name="Bai X."/>
            <person name="Zhang J."/>
            <person name="Ewing A."/>
            <person name="Miller S.A."/>
            <person name="Jancso Radek A."/>
            <person name="Shevchenko D.V."/>
            <person name="Tsukerman K."/>
            <person name="Walunas T."/>
            <person name="Lapidus A."/>
            <person name="Campbell J.W."/>
            <person name="Hogenhout S.A."/>
        </authorList>
    </citation>
    <scope>NUCLEOTIDE SEQUENCE [LARGE SCALE GENOMIC DNA]</scope>
    <source>
        <strain>AYWB</strain>
    </source>
</reference>
<gene>
    <name evidence="1" type="primary">tsf</name>
    <name type="ordered locus">AYWB_553</name>
</gene>
<dbReference type="EMBL" id="CP000061">
    <property type="protein sequence ID" value="ABC65670.1"/>
    <property type="molecule type" value="Genomic_DNA"/>
</dbReference>
<dbReference type="RefSeq" id="WP_011412832.1">
    <property type="nucleotide sequence ID" value="NC_007716.1"/>
</dbReference>
<dbReference type="SMR" id="Q2NIS3"/>
<dbReference type="STRING" id="322098.AYWB_553"/>
<dbReference type="KEGG" id="ayw:AYWB_553"/>
<dbReference type="eggNOG" id="COG0264">
    <property type="taxonomic scope" value="Bacteria"/>
</dbReference>
<dbReference type="HOGENOM" id="CLU_047155_0_2_14"/>
<dbReference type="OrthoDB" id="9808348at2"/>
<dbReference type="PhylomeDB" id="Q2NIS3"/>
<dbReference type="Proteomes" id="UP000001934">
    <property type="component" value="Chromosome"/>
</dbReference>
<dbReference type="GO" id="GO:0005737">
    <property type="term" value="C:cytoplasm"/>
    <property type="evidence" value="ECO:0007669"/>
    <property type="project" value="UniProtKB-SubCell"/>
</dbReference>
<dbReference type="GO" id="GO:0003746">
    <property type="term" value="F:translation elongation factor activity"/>
    <property type="evidence" value="ECO:0007669"/>
    <property type="project" value="UniProtKB-UniRule"/>
</dbReference>
<dbReference type="FunFam" id="1.10.8.10:FF:000001">
    <property type="entry name" value="Elongation factor Ts"/>
    <property type="match status" value="1"/>
</dbReference>
<dbReference type="Gene3D" id="1.10.286.20">
    <property type="match status" value="1"/>
</dbReference>
<dbReference type="Gene3D" id="1.10.8.10">
    <property type="entry name" value="DNA helicase RuvA subunit, C-terminal domain"/>
    <property type="match status" value="1"/>
</dbReference>
<dbReference type="Gene3D" id="3.30.479.20">
    <property type="entry name" value="Elongation factor Ts, dimerisation domain"/>
    <property type="match status" value="2"/>
</dbReference>
<dbReference type="HAMAP" id="MF_00050">
    <property type="entry name" value="EF_Ts"/>
    <property type="match status" value="1"/>
</dbReference>
<dbReference type="InterPro" id="IPR036402">
    <property type="entry name" value="EF-Ts_dimer_sf"/>
</dbReference>
<dbReference type="InterPro" id="IPR001816">
    <property type="entry name" value="Transl_elong_EFTs/EF1B"/>
</dbReference>
<dbReference type="InterPro" id="IPR014039">
    <property type="entry name" value="Transl_elong_EFTs/EF1B_dimer"/>
</dbReference>
<dbReference type="InterPro" id="IPR018101">
    <property type="entry name" value="Transl_elong_Ts_CS"/>
</dbReference>
<dbReference type="InterPro" id="IPR009060">
    <property type="entry name" value="UBA-like_sf"/>
</dbReference>
<dbReference type="NCBIfam" id="TIGR00116">
    <property type="entry name" value="tsf"/>
    <property type="match status" value="1"/>
</dbReference>
<dbReference type="PANTHER" id="PTHR11741">
    <property type="entry name" value="ELONGATION FACTOR TS"/>
    <property type="match status" value="1"/>
</dbReference>
<dbReference type="PANTHER" id="PTHR11741:SF0">
    <property type="entry name" value="ELONGATION FACTOR TS, MITOCHONDRIAL"/>
    <property type="match status" value="1"/>
</dbReference>
<dbReference type="Pfam" id="PF00889">
    <property type="entry name" value="EF_TS"/>
    <property type="match status" value="1"/>
</dbReference>
<dbReference type="SUPFAM" id="SSF54713">
    <property type="entry name" value="Elongation factor Ts (EF-Ts), dimerisation domain"/>
    <property type="match status" value="1"/>
</dbReference>
<dbReference type="SUPFAM" id="SSF46934">
    <property type="entry name" value="UBA-like"/>
    <property type="match status" value="1"/>
</dbReference>
<dbReference type="PROSITE" id="PS01127">
    <property type="entry name" value="EF_TS_2"/>
    <property type="match status" value="1"/>
</dbReference>
<comment type="function">
    <text evidence="1">Associates with the EF-Tu.GDP complex and induces the exchange of GDP to GTP. It remains bound to the aminoacyl-tRNA.EF-Tu.GTP complex up to the GTP hydrolysis stage on the ribosome.</text>
</comment>
<comment type="subcellular location">
    <subcellularLocation>
        <location evidence="1">Cytoplasm</location>
    </subcellularLocation>
</comment>
<comment type="similarity">
    <text evidence="1">Belongs to the EF-Ts family.</text>
</comment>